<organism>
    <name type="scientific">Synechococcus sp. (strain RCC307)</name>
    <dbReference type="NCBI Taxonomy" id="316278"/>
    <lineage>
        <taxon>Bacteria</taxon>
        <taxon>Bacillati</taxon>
        <taxon>Cyanobacteriota</taxon>
        <taxon>Cyanophyceae</taxon>
        <taxon>Synechococcales</taxon>
        <taxon>Synechococcaceae</taxon>
        <taxon>Synechococcus</taxon>
    </lineage>
</organism>
<gene>
    <name evidence="2" type="primary">atpA</name>
    <name type="ordered locus">SynRCC307_1878</name>
</gene>
<keyword id="KW-0066">ATP synthesis</keyword>
<keyword id="KW-0067">ATP-binding</keyword>
<keyword id="KW-0139">CF(1)</keyword>
<keyword id="KW-0375">Hydrogen ion transport</keyword>
<keyword id="KW-0406">Ion transport</keyword>
<keyword id="KW-0472">Membrane</keyword>
<keyword id="KW-0547">Nucleotide-binding</keyword>
<keyword id="KW-1185">Reference proteome</keyword>
<keyword id="KW-0793">Thylakoid</keyword>
<keyword id="KW-1278">Translocase</keyword>
<keyword id="KW-0813">Transport</keyword>
<feature type="chain" id="PRO_1000055086" description="ATP synthase subunit alpha">
    <location>
        <begin position="1"/>
        <end position="505"/>
    </location>
</feature>
<feature type="binding site" evidence="2">
    <location>
        <begin position="170"/>
        <end position="177"/>
    </location>
    <ligand>
        <name>ATP</name>
        <dbReference type="ChEBI" id="CHEBI:30616"/>
    </ligand>
</feature>
<feature type="site" description="Required for activity" evidence="2">
    <location>
        <position position="363"/>
    </location>
</feature>
<reference key="1">
    <citation type="submission" date="2006-05" db="EMBL/GenBank/DDBJ databases">
        <authorList>
            <consortium name="Genoscope"/>
        </authorList>
    </citation>
    <scope>NUCLEOTIDE SEQUENCE [LARGE SCALE GENOMIC DNA]</scope>
    <source>
        <strain>RCC307</strain>
    </source>
</reference>
<accession>A5GV72</accession>
<proteinExistence type="inferred from homology"/>
<protein>
    <recommendedName>
        <fullName evidence="2">ATP synthase subunit alpha</fullName>
        <ecNumber evidence="2">7.1.2.2</ecNumber>
    </recommendedName>
    <alternativeName>
        <fullName evidence="2">ATP synthase F1 sector subunit alpha</fullName>
    </alternativeName>
    <alternativeName>
        <fullName evidence="2">F-ATPase subunit alpha</fullName>
    </alternativeName>
</protein>
<sequence length="505" mass="53928">MVSIRPDEISAILKQQIEDYDKSVSVSNVGTVLQVGDGIARVYGLDKVMAGELVVFEDGTEGLALNLEDDNVGVVLMGEGYGIQEGSTVKATGKIASVPVGEAMLGRVVNPLGQPMDGKGEIASTDVRLIENPAPGIIQRKSVHEPMQTGITAIDAMIPIGRGQRELIIGDRQTGKTAIAIDTIINQKSEDVVCVYVAIGQKAASVAQVTEVLRERGALDYTVIVAAGASEAASLQYLAPYTGAAIAEHFMYQGKATLVIYDDLTKQAQAYRQMSLLLRRPPGREAYPGDVFYCHSRLLERAAKLSDAMGKGSMTALPIIETQAGDVSAYIPTNVISITDGQVFLSSDLFNSGLRPAINVGISVSRVGGAAQTKAIKKIAGTLKLELAQFDELAAFSQFASDLDAATQAQLGRGKRLRELLKQAQFSPLLLAEQVAIVYAGTKGLLDELPVEKVTEFVRELRDYLKTSKPEFINAIQTEKVMSESSEAILKDAIKQVVSGLLVAA</sequence>
<evidence type="ECO:0000250" key="1"/>
<evidence type="ECO:0000255" key="2">
    <source>
        <dbReference type="HAMAP-Rule" id="MF_01346"/>
    </source>
</evidence>
<name>ATPA_SYNR3</name>
<dbReference type="EC" id="7.1.2.2" evidence="2"/>
<dbReference type="EMBL" id="CT978603">
    <property type="protein sequence ID" value="CAK28781.1"/>
    <property type="molecule type" value="Genomic_DNA"/>
</dbReference>
<dbReference type="SMR" id="A5GV72"/>
<dbReference type="STRING" id="316278.SynRCC307_1878"/>
<dbReference type="KEGG" id="syr:SynRCC307_1878"/>
<dbReference type="eggNOG" id="COG0056">
    <property type="taxonomic scope" value="Bacteria"/>
</dbReference>
<dbReference type="HOGENOM" id="CLU_010091_2_1_3"/>
<dbReference type="OrthoDB" id="9803053at2"/>
<dbReference type="Proteomes" id="UP000001115">
    <property type="component" value="Chromosome"/>
</dbReference>
<dbReference type="GO" id="GO:0031676">
    <property type="term" value="C:plasma membrane-derived thylakoid membrane"/>
    <property type="evidence" value="ECO:0007669"/>
    <property type="project" value="UniProtKB-SubCell"/>
</dbReference>
<dbReference type="GO" id="GO:0045259">
    <property type="term" value="C:proton-transporting ATP synthase complex"/>
    <property type="evidence" value="ECO:0007669"/>
    <property type="project" value="UniProtKB-KW"/>
</dbReference>
<dbReference type="GO" id="GO:0043531">
    <property type="term" value="F:ADP binding"/>
    <property type="evidence" value="ECO:0007669"/>
    <property type="project" value="TreeGrafter"/>
</dbReference>
<dbReference type="GO" id="GO:0005524">
    <property type="term" value="F:ATP binding"/>
    <property type="evidence" value="ECO:0007669"/>
    <property type="project" value="UniProtKB-UniRule"/>
</dbReference>
<dbReference type="GO" id="GO:0046933">
    <property type="term" value="F:proton-transporting ATP synthase activity, rotational mechanism"/>
    <property type="evidence" value="ECO:0007669"/>
    <property type="project" value="UniProtKB-UniRule"/>
</dbReference>
<dbReference type="CDD" id="cd18113">
    <property type="entry name" value="ATP-synt_F1_alpha_C"/>
    <property type="match status" value="1"/>
</dbReference>
<dbReference type="CDD" id="cd18116">
    <property type="entry name" value="ATP-synt_F1_alpha_N"/>
    <property type="match status" value="1"/>
</dbReference>
<dbReference type="CDD" id="cd01132">
    <property type="entry name" value="F1-ATPase_alpha_CD"/>
    <property type="match status" value="1"/>
</dbReference>
<dbReference type="FunFam" id="1.20.150.20:FF:000001">
    <property type="entry name" value="ATP synthase subunit alpha"/>
    <property type="match status" value="1"/>
</dbReference>
<dbReference type="FunFam" id="2.40.30.20:FF:000001">
    <property type="entry name" value="ATP synthase subunit alpha"/>
    <property type="match status" value="1"/>
</dbReference>
<dbReference type="FunFam" id="3.40.50.300:FF:000002">
    <property type="entry name" value="ATP synthase subunit alpha"/>
    <property type="match status" value="1"/>
</dbReference>
<dbReference type="Gene3D" id="2.40.30.20">
    <property type="match status" value="1"/>
</dbReference>
<dbReference type="Gene3D" id="1.20.150.20">
    <property type="entry name" value="ATP synthase alpha/beta chain, C-terminal domain"/>
    <property type="match status" value="1"/>
</dbReference>
<dbReference type="Gene3D" id="3.40.50.300">
    <property type="entry name" value="P-loop containing nucleotide triphosphate hydrolases"/>
    <property type="match status" value="1"/>
</dbReference>
<dbReference type="HAMAP" id="MF_01346">
    <property type="entry name" value="ATP_synth_alpha_bact"/>
    <property type="match status" value="1"/>
</dbReference>
<dbReference type="InterPro" id="IPR023366">
    <property type="entry name" value="ATP_synth_asu-like_sf"/>
</dbReference>
<dbReference type="InterPro" id="IPR000793">
    <property type="entry name" value="ATP_synth_asu_C"/>
</dbReference>
<dbReference type="InterPro" id="IPR038376">
    <property type="entry name" value="ATP_synth_asu_C_sf"/>
</dbReference>
<dbReference type="InterPro" id="IPR033732">
    <property type="entry name" value="ATP_synth_F1_a_nt-bd_dom"/>
</dbReference>
<dbReference type="InterPro" id="IPR005294">
    <property type="entry name" value="ATP_synth_F1_asu"/>
</dbReference>
<dbReference type="InterPro" id="IPR020003">
    <property type="entry name" value="ATPase_a/bsu_AS"/>
</dbReference>
<dbReference type="InterPro" id="IPR004100">
    <property type="entry name" value="ATPase_F1/V1/A1_a/bsu_N"/>
</dbReference>
<dbReference type="InterPro" id="IPR036121">
    <property type="entry name" value="ATPase_F1/V1/A1_a/bsu_N_sf"/>
</dbReference>
<dbReference type="InterPro" id="IPR000194">
    <property type="entry name" value="ATPase_F1/V1/A1_a/bsu_nucl-bd"/>
</dbReference>
<dbReference type="InterPro" id="IPR027417">
    <property type="entry name" value="P-loop_NTPase"/>
</dbReference>
<dbReference type="NCBIfam" id="TIGR00962">
    <property type="entry name" value="atpA"/>
    <property type="match status" value="1"/>
</dbReference>
<dbReference type="NCBIfam" id="NF009884">
    <property type="entry name" value="PRK13343.1"/>
    <property type="match status" value="1"/>
</dbReference>
<dbReference type="PANTHER" id="PTHR48082">
    <property type="entry name" value="ATP SYNTHASE SUBUNIT ALPHA, MITOCHONDRIAL"/>
    <property type="match status" value="1"/>
</dbReference>
<dbReference type="PANTHER" id="PTHR48082:SF2">
    <property type="entry name" value="ATP SYNTHASE SUBUNIT ALPHA, MITOCHONDRIAL"/>
    <property type="match status" value="1"/>
</dbReference>
<dbReference type="Pfam" id="PF00006">
    <property type="entry name" value="ATP-synt_ab"/>
    <property type="match status" value="1"/>
</dbReference>
<dbReference type="Pfam" id="PF00306">
    <property type="entry name" value="ATP-synt_ab_C"/>
    <property type="match status" value="1"/>
</dbReference>
<dbReference type="Pfam" id="PF02874">
    <property type="entry name" value="ATP-synt_ab_N"/>
    <property type="match status" value="1"/>
</dbReference>
<dbReference type="PIRSF" id="PIRSF039088">
    <property type="entry name" value="F_ATPase_subunit_alpha"/>
    <property type="match status" value="1"/>
</dbReference>
<dbReference type="SUPFAM" id="SSF47917">
    <property type="entry name" value="C-terminal domain of alpha and beta subunits of F1 ATP synthase"/>
    <property type="match status" value="1"/>
</dbReference>
<dbReference type="SUPFAM" id="SSF50615">
    <property type="entry name" value="N-terminal domain of alpha and beta subunits of F1 ATP synthase"/>
    <property type="match status" value="1"/>
</dbReference>
<dbReference type="SUPFAM" id="SSF52540">
    <property type="entry name" value="P-loop containing nucleoside triphosphate hydrolases"/>
    <property type="match status" value="1"/>
</dbReference>
<dbReference type="PROSITE" id="PS00152">
    <property type="entry name" value="ATPASE_ALPHA_BETA"/>
    <property type="match status" value="1"/>
</dbReference>
<comment type="function">
    <text evidence="2">Produces ATP from ADP in the presence of a proton gradient across the membrane. The alpha chain is a regulatory subunit.</text>
</comment>
<comment type="catalytic activity">
    <reaction evidence="2">
        <text>ATP + H2O + 4 H(+)(in) = ADP + phosphate + 5 H(+)(out)</text>
        <dbReference type="Rhea" id="RHEA:57720"/>
        <dbReference type="ChEBI" id="CHEBI:15377"/>
        <dbReference type="ChEBI" id="CHEBI:15378"/>
        <dbReference type="ChEBI" id="CHEBI:30616"/>
        <dbReference type="ChEBI" id="CHEBI:43474"/>
        <dbReference type="ChEBI" id="CHEBI:456216"/>
        <dbReference type="EC" id="7.1.2.2"/>
    </reaction>
</comment>
<comment type="subunit">
    <text evidence="1">F-type ATPases have 2 components, CF(1) - the catalytic core - and CF(0) - the membrane proton channel. CF(1) has five subunits: alpha(3), beta(3), gamma(1), delta(1), epsilon(1). CF(0) has four main subunits: a(1), b(1), b'(1) and c(9-12) (By similarity).</text>
</comment>
<comment type="subcellular location">
    <subcellularLocation>
        <location evidence="2">Cellular thylakoid membrane</location>
        <topology evidence="2">Peripheral membrane protein</topology>
    </subcellularLocation>
</comment>
<comment type="similarity">
    <text evidence="2">Belongs to the ATPase alpha/beta chains family.</text>
</comment>